<protein>
    <recommendedName>
        <fullName>Septin-4</fullName>
    </recommendedName>
</protein>
<dbReference type="EMBL" id="AB169769">
    <property type="protein sequence ID" value="BAE01850.1"/>
    <property type="molecule type" value="mRNA"/>
</dbReference>
<dbReference type="SMR" id="Q4R4X5"/>
<dbReference type="STRING" id="9541.ENSMFAP00000038356"/>
<dbReference type="eggNOG" id="KOG2655">
    <property type="taxonomic scope" value="Eukaryota"/>
</dbReference>
<dbReference type="Proteomes" id="UP000233100">
    <property type="component" value="Unplaced"/>
</dbReference>
<dbReference type="GO" id="GO:0030424">
    <property type="term" value="C:axon"/>
    <property type="evidence" value="ECO:0000250"/>
    <property type="project" value="UniProtKB"/>
</dbReference>
<dbReference type="GO" id="GO:0005737">
    <property type="term" value="C:cytoplasm"/>
    <property type="evidence" value="ECO:0000250"/>
    <property type="project" value="UniProtKB"/>
</dbReference>
<dbReference type="GO" id="GO:0030425">
    <property type="term" value="C:dendrite"/>
    <property type="evidence" value="ECO:0000250"/>
    <property type="project" value="UniProtKB"/>
</dbReference>
<dbReference type="GO" id="GO:0043204">
    <property type="term" value="C:perikaryon"/>
    <property type="evidence" value="ECO:0000250"/>
    <property type="project" value="UniProtKB"/>
</dbReference>
<dbReference type="GO" id="GO:0031105">
    <property type="term" value="C:septin complex"/>
    <property type="evidence" value="ECO:0000250"/>
    <property type="project" value="UniProtKB"/>
</dbReference>
<dbReference type="GO" id="GO:0097227">
    <property type="term" value="C:sperm annulus"/>
    <property type="evidence" value="ECO:0000250"/>
    <property type="project" value="UniProtKB"/>
</dbReference>
<dbReference type="GO" id="GO:0045202">
    <property type="term" value="C:synapse"/>
    <property type="evidence" value="ECO:0007669"/>
    <property type="project" value="UniProtKB-SubCell"/>
</dbReference>
<dbReference type="GO" id="GO:0030133">
    <property type="term" value="C:transport vesicle"/>
    <property type="evidence" value="ECO:0007669"/>
    <property type="project" value="UniProtKB-SubCell"/>
</dbReference>
<dbReference type="GO" id="GO:0005525">
    <property type="term" value="F:GTP binding"/>
    <property type="evidence" value="ECO:0007669"/>
    <property type="project" value="UniProtKB-KW"/>
</dbReference>
<dbReference type="GO" id="GO:0051301">
    <property type="term" value="P:cell division"/>
    <property type="evidence" value="ECO:0007669"/>
    <property type="project" value="UniProtKB-KW"/>
</dbReference>
<dbReference type="GO" id="GO:0030317">
    <property type="term" value="P:flagellated sperm motility"/>
    <property type="evidence" value="ECO:0000250"/>
    <property type="project" value="UniProtKB"/>
</dbReference>
<dbReference type="GO" id="GO:0061484">
    <property type="term" value="P:hematopoietic stem cell homeostasis"/>
    <property type="evidence" value="ECO:0000250"/>
    <property type="project" value="UniProtKB"/>
</dbReference>
<dbReference type="GO" id="GO:0001764">
    <property type="term" value="P:neuron migration"/>
    <property type="evidence" value="ECO:0000250"/>
    <property type="project" value="UniProtKB"/>
</dbReference>
<dbReference type="GO" id="GO:0048515">
    <property type="term" value="P:spermatid differentiation"/>
    <property type="evidence" value="ECO:0000250"/>
    <property type="project" value="UniProtKB"/>
</dbReference>
<dbReference type="CDD" id="cd01850">
    <property type="entry name" value="CDC_Septin"/>
    <property type="match status" value="1"/>
</dbReference>
<dbReference type="FunFam" id="3.40.50.300:FF:000064">
    <property type="entry name" value="Septin 4"/>
    <property type="match status" value="1"/>
</dbReference>
<dbReference type="Gene3D" id="3.40.50.300">
    <property type="entry name" value="P-loop containing nucleotide triphosphate hydrolases"/>
    <property type="match status" value="1"/>
</dbReference>
<dbReference type="InterPro" id="IPR030379">
    <property type="entry name" value="G_SEPTIN_dom"/>
</dbReference>
<dbReference type="InterPro" id="IPR027417">
    <property type="entry name" value="P-loop_NTPase"/>
</dbReference>
<dbReference type="InterPro" id="IPR016491">
    <property type="entry name" value="Septin"/>
</dbReference>
<dbReference type="PANTHER" id="PTHR18884">
    <property type="entry name" value="SEPTIN"/>
    <property type="match status" value="1"/>
</dbReference>
<dbReference type="Pfam" id="PF00735">
    <property type="entry name" value="Septin"/>
    <property type="match status" value="1"/>
</dbReference>
<dbReference type="SUPFAM" id="SSF52540">
    <property type="entry name" value="P-loop containing nucleoside triphosphate hydrolases"/>
    <property type="match status" value="1"/>
</dbReference>
<dbReference type="PROSITE" id="PS51719">
    <property type="entry name" value="G_SEPTIN"/>
    <property type="match status" value="1"/>
</dbReference>
<name>SEPT4_MACFA</name>
<evidence type="ECO:0000250" key="1">
    <source>
        <dbReference type="UniProtKB" id="O43236"/>
    </source>
</evidence>
<evidence type="ECO:0000250" key="2">
    <source>
        <dbReference type="UniProtKB" id="P28661"/>
    </source>
</evidence>
<evidence type="ECO:0000250" key="3">
    <source>
        <dbReference type="UniProtKB" id="Q9UH03"/>
    </source>
</evidence>
<evidence type="ECO:0000255" key="4"/>
<evidence type="ECO:0000255" key="5">
    <source>
        <dbReference type="PROSITE-ProRule" id="PRU01056"/>
    </source>
</evidence>
<evidence type="ECO:0000256" key="6">
    <source>
        <dbReference type="SAM" id="MobiDB-lite"/>
    </source>
</evidence>
<evidence type="ECO:0000305" key="7"/>
<proteinExistence type="evidence at transcript level"/>
<organism>
    <name type="scientific">Macaca fascicularis</name>
    <name type="common">Crab-eating macaque</name>
    <name type="synonym">Cynomolgus monkey</name>
    <dbReference type="NCBI Taxonomy" id="9541"/>
    <lineage>
        <taxon>Eukaryota</taxon>
        <taxon>Metazoa</taxon>
        <taxon>Chordata</taxon>
        <taxon>Craniata</taxon>
        <taxon>Vertebrata</taxon>
        <taxon>Euteleostomi</taxon>
        <taxon>Mammalia</taxon>
        <taxon>Eutheria</taxon>
        <taxon>Euarchontoglires</taxon>
        <taxon>Primates</taxon>
        <taxon>Haplorrhini</taxon>
        <taxon>Catarrhini</taxon>
        <taxon>Cercopithecidae</taxon>
        <taxon>Cercopithecinae</taxon>
        <taxon>Macaca</taxon>
    </lineage>
</organism>
<keyword id="KW-0131">Cell cycle</keyword>
<keyword id="KW-0132">Cell division</keyword>
<keyword id="KW-0966">Cell projection</keyword>
<keyword id="KW-0969">Cilium</keyword>
<keyword id="KW-0175">Coiled coil</keyword>
<keyword id="KW-0963">Cytoplasm</keyword>
<keyword id="KW-0968">Cytoplasmic vesicle</keyword>
<keyword id="KW-0221">Differentiation</keyword>
<keyword id="KW-0282">Flagellum</keyword>
<keyword id="KW-0342">GTP-binding</keyword>
<keyword id="KW-0547">Nucleotide-binding</keyword>
<keyword id="KW-0597">Phosphoprotein</keyword>
<keyword id="KW-1185">Reference proteome</keyword>
<keyword id="KW-0744">Spermatogenesis</keyword>
<keyword id="KW-0770">Synapse</keyword>
<keyword id="KW-0832">Ubl conjugation</keyword>
<comment type="function">
    <text evidence="2 7">Filament-forming cytoskeletal GTPase (Probable). Pro-apoptotic protein involved in LGR5-positive intestinal stem cell and Paneth cell expansion in the intestines, via its interaction with XIAP (By similarity). May also play a role in the regulation of cell fate in the intestine (By similarity). Positive regulator of apoptosis involved in hematopoietic stem cell homeostasis; via its interaction with XIAP (By similarity). Negative regulator of repair and hair follicle regeneration in response to injury, due to inhibition of hair follicle stem cell proliferation, potentially via its interaction with XIAP (By similarity). Plays an important role in male fertility and sperm motility (By similarity). During spermiogenesis, essential for the establishment of the annulus (a fibrous ring structure connecting the midpiece and the principal piece of the sperm flagellum) which is a requisite for the structural and mechanical integrity of the sperm (By similarity). Involved in the migration of cortical neurons and the formation of neuron leading processes during embryonic development (By similarity). Required for dopaminergic metabolism in presynaptic autoreceptors; potentially via activity as a presynaptic scaffold protein (By similarity).</text>
</comment>
<comment type="subunit">
    <text evidence="1 2">Septins polymerize into heterooligomeric protein complexes that form filaments, and can associate with cellular membranes, actin filaments and microtubules. GTPase activity is required for filament formation. Interacts with SEPTIN8 (By similarity). Component of a septin core octameric complex consisting of SEPTIN12, SEPTIN7, SEPTIN6 and SEPTIN2 or SEPTIN4 in the order 12-7-6-2-2-6-7-12 or 12-7-6-4-4-6-7-12 (By similarity). Interacts with SEPTIN14 (via C-terminus) (By similarity). Interacts with DYRK1A (By similarity). Interacts with SLC6A3/DAT and SNCA/alpha-synuclein (By similarity). Interacts with STX1A; in the striatum (By similarity). Interacts with XIAP (via BIR3 domain) following the induction of apoptosis (By similarity). Interacts with AREL1 (via HECT domain); in the cytoplasm following induction of apoptosis (By similarity).</text>
</comment>
<comment type="subcellular location">
    <subcellularLocation>
        <location evidence="2">Cytoplasm</location>
    </subcellularLocation>
    <subcellularLocation>
        <location evidence="1">Cell projection</location>
        <location evidence="1">Cilium</location>
        <location evidence="1">Flagellum</location>
    </subcellularLocation>
    <subcellularLocation>
        <location evidence="1">Cytoplasmic vesicle</location>
        <location evidence="1">Secretory vesicle</location>
    </subcellularLocation>
    <subcellularLocation>
        <location evidence="2">Cell projection</location>
        <location evidence="2">Axon</location>
    </subcellularLocation>
    <subcellularLocation>
        <location evidence="2">Cell projection</location>
        <location evidence="2">Dendrite</location>
    </subcellularLocation>
    <subcellularLocation>
        <location evidence="2">Perikaryon</location>
    </subcellularLocation>
    <subcellularLocation>
        <location evidence="1">Synapse</location>
    </subcellularLocation>
    <text evidence="1 2">In platelets, found in areas surrounding alpha-granules (By similarity). Found in the sperm annulus, a fibrous ring structure connecting the midpiece and the principal piece of the sperm flagellum (By similarity). Expressed and colocalized with SLC6A3 and SNCA in axon terminals, especially at the varicosities (By similarity).</text>
</comment>
<comment type="PTM">
    <text evidence="1">Ubiquitinated by AREL1.</text>
</comment>
<comment type="PTM">
    <text evidence="2">Phosphorylated by DYRK1A.</text>
</comment>
<comment type="similarity">
    <text evidence="5">Belongs to the TRAFAC class TrmE-Era-EngA-EngB-Septin-like GTPase superfamily. Septin GTPase family.</text>
</comment>
<reference key="1">
    <citation type="submission" date="2005-06" db="EMBL/GenBank/DDBJ databases">
        <title>DNA sequences of macaque genes expressed in brain or testis and its evolutionary implications.</title>
        <authorList>
            <consortium name="International consortium for macaque cDNA sequencing and analysis"/>
        </authorList>
    </citation>
    <scope>NUCLEOTIDE SEQUENCE [LARGE SCALE MRNA]</scope>
    <source>
        <tissue>Temporal cortex</tissue>
    </source>
</reference>
<feature type="chain" id="PRO_0000223473" description="Septin-4">
    <location>
        <begin position="1"/>
        <end position="478"/>
    </location>
</feature>
<feature type="domain" description="Septin-type G" evidence="5">
    <location>
        <begin position="141"/>
        <end position="414"/>
    </location>
</feature>
<feature type="region of interest" description="Disordered" evidence="6">
    <location>
        <begin position="40"/>
        <end position="74"/>
    </location>
</feature>
<feature type="region of interest" description="Disordered" evidence="6">
    <location>
        <begin position="87"/>
        <end position="115"/>
    </location>
</feature>
<feature type="region of interest" description="G1 motif" evidence="5">
    <location>
        <begin position="151"/>
        <end position="158"/>
    </location>
</feature>
<feature type="region of interest" description="G3 motif" evidence="5">
    <location>
        <begin position="208"/>
        <end position="211"/>
    </location>
</feature>
<feature type="region of interest" description="G4 motif" evidence="5">
    <location>
        <begin position="289"/>
        <end position="292"/>
    </location>
</feature>
<feature type="region of interest" description="Disordered" evidence="6">
    <location>
        <begin position="428"/>
        <end position="448"/>
    </location>
</feature>
<feature type="coiled-coil region" evidence="4">
    <location>
        <begin position="446"/>
        <end position="478"/>
    </location>
</feature>
<feature type="compositionally biased region" description="Low complexity" evidence="6">
    <location>
        <begin position="95"/>
        <end position="108"/>
    </location>
</feature>
<feature type="binding site" evidence="3">
    <location>
        <begin position="151"/>
        <end position="158"/>
    </location>
    <ligand>
        <name>GTP</name>
        <dbReference type="ChEBI" id="CHEBI:37565"/>
    </ligand>
</feature>
<feature type="binding site" evidence="3">
    <location>
        <position position="185"/>
    </location>
    <ligand>
        <name>GTP</name>
        <dbReference type="ChEBI" id="CHEBI:37565"/>
    </ligand>
</feature>
<feature type="binding site" evidence="3">
    <location>
        <begin position="290"/>
        <end position="298"/>
    </location>
    <ligand>
        <name>GTP</name>
        <dbReference type="ChEBI" id="CHEBI:37565"/>
    </ligand>
</feature>
<feature type="binding site" evidence="3">
    <location>
        <position position="348"/>
    </location>
    <ligand>
        <name>GTP</name>
        <dbReference type="ChEBI" id="CHEBI:37565"/>
    </ligand>
</feature>
<feature type="binding site" evidence="3">
    <location>
        <position position="363"/>
    </location>
    <ligand>
        <name>GTP</name>
        <dbReference type="ChEBI" id="CHEBI:37565"/>
    </ligand>
</feature>
<feature type="modified residue" description="Phosphoserine" evidence="1">
    <location>
        <position position="117"/>
    </location>
</feature>
<feature type="modified residue" description="Phosphoserine" evidence="1">
    <location>
        <position position="118"/>
    </location>
</feature>
<feature type="modified residue" description="Phosphoserine" evidence="1">
    <location>
        <position position="325"/>
    </location>
</feature>
<feature type="modified residue" description="Phosphoserine" evidence="2">
    <location>
        <position position="432"/>
    </location>
</feature>
<feature type="modified residue" description="Phosphothreonine" evidence="2">
    <location>
        <position position="434"/>
    </location>
</feature>
<sequence>MDRSLGWQGSSVPEDRTEAGIKRFLEDTTDDGELSKFVKDFSGNESCHPPEAKTWASRPQVLEPRPQAPDLYDDDLEFRPPSWPQSADNQQYFCAPAPLSPSARPRSPWGKLDPYDSSEDDKEYVGFATLPNQVHRKSVKKGFDFTLMVAGESGLGKSTLVNSLFLTDLYRDRKLLGAEERIMQTVEITKHAVDIEEKGVRLRLTIVDTPGFGDAVNNTECWKPVAEYIDQQFEQYFRDESGLNRKNIQDNRVHCCLYFISPFGHGLRPLDVEFMKALHQRVNIVPILAKADTLTPPEVDRKKRKIREEIEHFGIKIYQFPDCDSDEDEDFKLQDQALKESIPFAVIGSNTVVEARGRRVRGRLYPWGIVEVENPGHCDFVKLRTMLVRTHMQDLKDVTRETHYENYRAQCIQSMTRLVVKERNRNKLTRESGTDFPIPAVPPGTDPETEKLIREKDEELRRMQEILHKIQKQMKETY</sequence>
<accession>Q4R4X5</accession>
<gene>
    <name evidence="1" type="primary">SEPTIN4</name>
    <name type="synonym">SEPT4</name>
    <name type="ORF">QtrA-12058</name>
</gene>